<protein>
    <recommendedName>
        <fullName evidence="1">Cell division protein ZapA</fullName>
    </recommendedName>
    <alternativeName>
        <fullName evidence="1">Z ring-associated protein ZapA</fullName>
    </alternativeName>
</protein>
<evidence type="ECO:0000255" key="1">
    <source>
        <dbReference type="HAMAP-Rule" id="MF_02013"/>
    </source>
</evidence>
<evidence type="ECO:0000305" key="2"/>
<name>ZAPA_BACAH</name>
<reference key="1">
    <citation type="journal article" date="2007" name="J. Bacteriol.">
        <title>The complete genome sequence of Bacillus thuringiensis Al Hakam.</title>
        <authorList>
            <person name="Challacombe J.F."/>
            <person name="Altherr M.R."/>
            <person name="Xie G."/>
            <person name="Bhotika S.S."/>
            <person name="Brown N."/>
            <person name="Bruce D."/>
            <person name="Campbell C.S."/>
            <person name="Campbell M.L."/>
            <person name="Chen J."/>
            <person name="Chertkov O."/>
            <person name="Cleland C."/>
            <person name="Dimitrijevic M."/>
            <person name="Doggett N.A."/>
            <person name="Fawcett J.J."/>
            <person name="Glavina T."/>
            <person name="Goodwin L.A."/>
            <person name="Green L.D."/>
            <person name="Han C.S."/>
            <person name="Hill K.K."/>
            <person name="Hitchcock P."/>
            <person name="Jackson P.J."/>
            <person name="Keim P."/>
            <person name="Kewalramani A.R."/>
            <person name="Longmire J."/>
            <person name="Lucas S."/>
            <person name="Malfatti S."/>
            <person name="Martinez D."/>
            <person name="McMurry K."/>
            <person name="Meincke L.J."/>
            <person name="Misra M."/>
            <person name="Moseman B.L."/>
            <person name="Mundt M."/>
            <person name="Munk A.C."/>
            <person name="Okinaka R.T."/>
            <person name="Parson-Quintana B."/>
            <person name="Reilly L.P."/>
            <person name="Richardson P."/>
            <person name="Robinson D.L."/>
            <person name="Saunders E."/>
            <person name="Tapia R."/>
            <person name="Tesmer J.G."/>
            <person name="Thayer N."/>
            <person name="Thompson L.S."/>
            <person name="Tice H."/>
            <person name="Ticknor L.O."/>
            <person name="Wills P.L."/>
            <person name="Gilna P."/>
            <person name="Brettin T.S."/>
        </authorList>
    </citation>
    <scope>NUCLEOTIDE SEQUENCE [LARGE SCALE GENOMIC DNA]</scope>
    <source>
        <strain>Al Hakam</strain>
    </source>
</reference>
<dbReference type="EMBL" id="CP000485">
    <property type="protein sequence ID" value="ABK87348.1"/>
    <property type="status" value="ALT_INIT"/>
    <property type="molecule type" value="Genomic_DNA"/>
</dbReference>
<dbReference type="RefSeq" id="WP_000082701.1">
    <property type="nucleotide sequence ID" value="NC_008600.1"/>
</dbReference>
<dbReference type="SMR" id="A0RJF5"/>
<dbReference type="GeneID" id="93006559"/>
<dbReference type="KEGG" id="btl:BALH_4138"/>
<dbReference type="HOGENOM" id="CLU_116623_4_0_9"/>
<dbReference type="GO" id="GO:0032153">
    <property type="term" value="C:cell division site"/>
    <property type="evidence" value="ECO:0007669"/>
    <property type="project" value="TreeGrafter"/>
</dbReference>
<dbReference type="GO" id="GO:0030428">
    <property type="term" value="C:cell septum"/>
    <property type="evidence" value="ECO:0007669"/>
    <property type="project" value="TreeGrafter"/>
</dbReference>
<dbReference type="GO" id="GO:0005829">
    <property type="term" value="C:cytosol"/>
    <property type="evidence" value="ECO:0007669"/>
    <property type="project" value="TreeGrafter"/>
</dbReference>
<dbReference type="GO" id="GO:0005886">
    <property type="term" value="C:plasma membrane"/>
    <property type="evidence" value="ECO:0007669"/>
    <property type="project" value="UniProtKB-UniRule"/>
</dbReference>
<dbReference type="GO" id="GO:0000917">
    <property type="term" value="P:division septum assembly"/>
    <property type="evidence" value="ECO:0007669"/>
    <property type="project" value="UniProtKB-KW"/>
</dbReference>
<dbReference type="GO" id="GO:0043093">
    <property type="term" value="P:FtsZ-dependent cytokinesis"/>
    <property type="evidence" value="ECO:0007669"/>
    <property type="project" value="TreeGrafter"/>
</dbReference>
<dbReference type="GO" id="GO:0000921">
    <property type="term" value="P:septin ring assembly"/>
    <property type="evidence" value="ECO:0007669"/>
    <property type="project" value="TreeGrafter"/>
</dbReference>
<dbReference type="Gene3D" id="6.10.250.790">
    <property type="match status" value="1"/>
</dbReference>
<dbReference type="HAMAP" id="MF_02013">
    <property type="entry name" value="ZapA_type2"/>
    <property type="match status" value="1"/>
</dbReference>
<dbReference type="InterPro" id="IPR053712">
    <property type="entry name" value="Bac_CellDiv_Activator"/>
</dbReference>
<dbReference type="InterPro" id="IPR007838">
    <property type="entry name" value="Cell_div_ZapA-like"/>
</dbReference>
<dbReference type="InterPro" id="IPR036192">
    <property type="entry name" value="Cell_div_ZapA-like_sf"/>
</dbReference>
<dbReference type="InterPro" id="IPR023688">
    <property type="entry name" value="Cell_div_ZapA_firmicutes"/>
</dbReference>
<dbReference type="NCBIfam" id="NF010724">
    <property type="entry name" value="PRK14126.1"/>
    <property type="match status" value="1"/>
</dbReference>
<dbReference type="PANTHER" id="PTHR34981">
    <property type="entry name" value="CELL DIVISION PROTEIN ZAPA"/>
    <property type="match status" value="1"/>
</dbReference>
<dbReference type="PANTHER" id="PTHR34981:SF1">
    <property type="entry name" value="CELL DIVISION PROTEIN ZAPA"/>
    <property type="match status" value="1"/>
</dbReference>
<dbReference type="Pfam" id="PF05164">
    <property type="entry name" value="ZapA"/>
    <property type="match status" value="1"/>
</dbReference>
<dbReference type="SUPFAM" id="SSF102829">
    <property type="entry name" value="Cell division protein ZapA-like"/>
    <property type="match status" value="1"/>
</dbReference>
<accession>A0RJF5</accession>
<keyword id="KW-0131">Cell cycle</keyword>
<keyword id="KW-0132">Cell division</keyword>
<keyword id="KW-0963">Cytoplasm</keyword>
<keyword id="KW-0717">Septation</keyword>
<proteinExistence type="inferred from homology"/>
<gene>
    <name evidence="1" type="primary">zapA</name>
    <name type="ordered locus">BALH_4138</name>
</gene>
<feature type="chain" id="PRO_0000345676" description="Cell division protein ZapA">
    <location>
        <begin position="1"/>
        <end position="89"/>
    </location>
</feature>
<comment type="function">
    <text evidence="1">Activator of cell division through the inhibition of FtsZ GTPase activity, therefore promoting FtsZ assembly into bundles of protofilaments necessary for the formation of the division Z ring. It is recruited early at mid-cell but it is not essential for cell division.</text>
</comment>
<comment type="subunit">
    <text evidence="1">Homodimer. Interacts with FtsZ.</text>
</comment>
<comment type="subcellular location">
    <subcellularLocation>
        <location evidence="1">Cytoplasm</location>
    </subcellularLocation>
    <text evidence="1">Localizes at mid-cell. In sporulating cells, localizes near the cell poles.</text>
</comment>
<comment type="similarity">
    <text evidence="1">Belongs to the ZapA family. Type 2 subfamily.</text>
</comment>
<comment type="sequence caution" evidence="2">
    <conflict type="erroneous initiation">
        <sequence resource="EMBL-CDS" id="ABK87348"/>
    </conflict>
</comment>
<organism>
    <name type="scientific">Bacillus thuringiensis (strain Al Hakam)</name>
    <dbReference type="NCBI Taxonomy" id="412694"/>
    <lineage>
        <taxon>Bacteria</taxon>
        <taxon>Bacillati</taxon>
        <taxon>Bacillota</taxon>
        <taxon>Bacilli</taxon>
        <taxon>Bacillales</taxon>
        <taxon>Bacillaceae</taxon>
        <taxon>Bacillus</taxon>
        <taxon>Bacillus cereus group</taxon>
    </lineage>
</organism>
<sequence length="89" mass="10120">MSQQKGKKSRINVEIYGQQYSVVGDESTSHIRMVAAIVDDKMRELNAKNPSLDTSRLAVLTAVNVIHDYIKLKEEHEKLKESMTKKGME</sequence>